<organism>
    <name type="scientific">Moorella thermoacetica (strain ATCC 39073 / JCM 9320)</name>
    <dbReference type="NCBI Taxonomy" id="264732"/>
    <lineage>
        <taxon>Bacteria</taxon>
        <taxon>Bacillati</taxon>
        <taxon>Bacillota</taxon>
        <taxon>Clostridia</taxon>
        <taxon>Moorellales</taxon>
        <taxon>Moorellaceae</taxon>
        <taxon>Moorella</taxon>
    </lineage>
</organism>
<protein>
    <recommendedName>
        <fullName evidence="1">Large ribosomal subunit protein bL21</fullName>
    </recommendedName>
    <alternativeName>
        <fullName evidence="2">50S ribosomal protein L21</fullName>
    </alternativeName>
</protein>
<proteinExistence type="inferred from homology"/>
<dbReference type="EMBL" id="CP000232">
    <property type="protein sequence ID" value="ABC18887.1"/>
    <property type="molecule type" value="Genomic_DNA"/>
</dbReference>
<dbReference type="RefSeq" id="YP_429430.1">
    <property type="nucleotide sequence ID" value="NC_007644.1"/>
</dbReference>
<dbReference type="SMR" id="Q2RL02"/>
<dbReference type="STRING" id="264732.Moth_0557"/>
<dbReference type="EnsemblBacteria" id="ABC18887">
    <property type="protein sequence ID" value="ABC18887"/>
    <property type="gene ID" value="Moth_0557"/>
</dbReference>
<dbReference type="KEGG" id="mta:Moth_0557"/>
<dbReference type="PATRIC" id="fig|264732.11.peg.600"/>
<dbReference type="eggNOG" id="COG0261">
    <property type="taxonomic scope" value="Bacteria"/>
</dbReference>
<dbReference type="HOGENOM" id="CLU_061463_3_2_9"/>
<dbReference type="OrthoDB" id="9813334at2"/>
<dbReference type="GO" id="GO:0005737">
    <property type="term" value="C:cytoplasm"/>
    <property type="evidence" value="ECO:0007669"/>
    <property type="project" value="UniProtKB-ARBA"/>
</dbReference>
<dbReference type="GO" id="GO:1990904">
    <property type="term" value="C:ribonucleoprotein complex"/>
    <property type="evidence" value="ECO:0007669"/>
    <property type="project" value="UniProtKB-KW"/>
</dbReference>
<dbReference type="GO" id="GO:0005840">
    <property type="term" value="C:ribosome"/>
    <property type="evidence" value="ECO:0007669"/>
    <property type="project" value="UniProtKB-KW"/>
</dbReference>
<dbReference type="GO" id="GO:0019843">
    <property type="term" value="F:rRNA binding"/>
    <property type="evidence" value="ECO:0007669"/>
    <property type="project" value="UniProtKB-UniRule"/>
</dbReference>
<dbReference type="GO" id="GO:0003735">
    <property type="term" value="F:structural constituent of ribosome"/>
    <property type="evidence" value="ECO:0007669"/>
    <property type="project" value="InterPro"/>
</dbReference>
<dbReference type="GO" id="GO:0006412">
    <property type="term" value="P:translation"/>
    <property type="evidence" value="ECO:0007669"/>
    <property type="project" value="UniProtKB-UniRule"/>
</dbReference>
<dbReference type="HAMAP" id="MF_01363">
    <property type="entry name" value="Ribosomal_bL21"/>
    <property type="match status" value="1"/>
</dbReference>
<dbReference type="InterPro" id="IPR028909">
    <property type="entry name" value="bL21-like"/>
</dbReference>
<dbReference type="InterPro" id="IPR036164">
    <property type="entry name" value="bL21-like_sf"/>
</dbReference>
<dbReference type="InterPro" id="IPR001787">
    <property type="entry name" value="Ribosomal_bL21"/>
</dbReference>
<dbReference type="InterPro" id="IPR018258">
    <property type="entry name" value="Ribosomal_bL21_CS"/>
</dbReference>
<dbReference type="NCBIfam" id="TIGR00061">
    <property type="entry name" value="L21"/>
    <property type="match status" value="1"/>
</dbReference>
<dbReference type="PANTHER" id="PTHR21349">
    <property type="entry name" value="50S RIBOSOMAL PROTEIN L21"/>
    <property type="match status" value="1"/>
</dbReference>
<dbReference type="PANTHER" id="PTHR21349:SF0">
    <property type="entry name" value="LARGE RIBOSOMAL SUBUNIT PROTEIN BL21M"/>
    <property type="match status" value="1"/>
</dbReference>
<dbReference type="Pfam" id="PF00829">
    <property type="entry name" value="Ribosomal_L21p"/>
    <property type="match status" value="1"/>
</dbReference>
<dbReference type="SUPFAM" id="SSF141091">
    <property type="entry name" value="L21p-like"/>
    <property type="match status" value="1"/>
</dbReference>
<dbReference type="PROSITE" id="PS01169">
    <property type="entry name" value="RIBOSOMAL_L21"/>
    <property type="match status" value="1"/>
</dbReference>
<feature type="chain" id="PRO_0000269344" description="Large ribosomal subunit protein bL21">
    <location>
        <begin position="1"/>
        <end position="104"/>
    </location>
</feature>
<accession>Q2RL02</accession>
<evidence type="ECO:0000255" key="1">
    <source>
        <dbReference type="HAMAP-Rule" id="MF_01363"/>
    </source>
</evidence>
<evidence type="ECO:0000305" key="2"/>
<keyword id="KW-0687">Ribonucleoprotein</keyword>
<keyword id="KW-0689">Ribosomal protein</keyword>
<keyword id="KW-0694">RNA-binding</keyword>
<keyword id="KW-0699">rRNA-binding</keyword>
<gene>
    <name evidence="1" type="primary">rplU</name>
    <name type="ordered locus">Moth_0557</name>
</gene>
<comment type="function">
    <text evidence="1">This protein binds to 23S rRNA in the presence of protein L20.</text>
</comment>
<comment type="subunit">
    <text evidence="1">Part of the 50S ribosomal subunit. Contacts protein L20.</text>
</comment>
<comment type="similarity">
    <text evidence="1">Belongs to the bacterial ribosomal protein bL21 family.</text>
</comment>
<name>RL21_MOOTA</name>
<sequence length="104" mass="11673">MYAIIMTGGKQYRVSEGDTLRVEKLPAEVGEKVVLDKVLAVGEGADLKVGNPYVEGAKVTASVQAQDKAPKIIVFKYKPKKNYRRKQGHRQPYTQLQIEKIEIQ</sequence>
<reference key="1">
    <citation type="journal article" date="2008" name="Environ. Microbiol.">
        <title>The complete genome sequence of Moorella thermoacetica (f. Clostridium thermoaceticum).</title>
        <authorList>
            <person name="Pierce E."/>
            <person name="Xie G."/>
            <person name="Barabote R.D."/>
            <person name="Saunders E."/>
            <person name="Han C.S."/>
            <person name="Detter J.C."/>
            <person name="Richardson P."/>
            <person name="Brettin T.S."/>
            <person name="Das A."/>
            <person name="Ljungdahl L.G."/>
            <person name="Ragsdale S.W."/>
        </authorList>
    </citation>
    <scope>NUCLEOTIDE SEQUENCE [LARGE SCALE GENOMIC DNA]</scope>
    <source>
        <strain>ATCC 39073 / JCM 9320</strain>
    </source>
</reference>